<proteinExistence type="evidence at transcript level"/>
<comment type="alternative products">
    <event type="alternative splicing"/>
    <isoform>
        <id>Q69QB8-1</id>
        <name>1</name>
        <sequence type="displayed"/>
    </isoform>
    <isoform>
        <id>Q69QB8-2</id>
        <name>2</name>
        <sequence type="described" ref="VSP_025283 VSP_025284"/>
    </isoform>
</comment>
<comment type="similarity">
    <text evidence="3">Belongs to the cyclin family. Cyclin D subfamily.</text>
</comment>
<keyword id="KW-0025">Alternative splicing</keyword>
<keyword id="KW-0131">Cell cycle</keyword>
<keyword id="KW-0132">Cell division</keyword>
<keyword id="KW-0195">Cyclin</keyword>
<keyword id="KW-1185">Reference proteome</keyword>
<accession>Q69QB8</accession>
<gene>
    <name type="primary">CYCD3-1</name>
    <name type="ordered locus">Os06g0217900</name>
    <name type="ordered locus">LOC_Os06g11410</name>
    <name type="ORF">P0644A02.8</name>
</gene>
<feature type="chain" id="PRO_0000287027" description="Cyclin-D3-1">
    <location>
        <begin position="1"/>
        <end position="342"/>
    </location>
</feature>
<feature type="region of interest" description="Disordered" evidence="1">
    <location>
        <begin position="322"/>
        <end position="342"/>
    </location>
</feature>
<feature type="compositionally biased region" description="Polar residues" evidence="1">
    <location>
        <begin position="322"/>
        <end position="334"/>
    </location>
</feature>
<feature type="splice variant" id="VSP_025283" description="In isoform 2." evidence="2">
    <location>
        <begin position="1"/>
        <end position="119"/>
    </location>
</feature>
<feature type="splice variant" id="VSP_025284" description="In isoform 2." evidence="2">
    <original>RFLSVFDLP</original>
    <variation>MEQLHSEFQ</variation>
    <location>
        <begin position="120"/>
        <end position="128"/>
    </location>
</feature>
<sequence length="342" mass="38276">MAPSFDFAASILLCAEDNTAILDLGEESEEISWVVGVDASLGDLSMDFPLQSDDCIEALLGREEQQHIPMEGYLQRLLLQPDGLDLVAVRSDAIDWIWKVHELYKFGPLTAVLSVNYLDRFLSVFDLPQEEACMTQLLAVASLSLAAKMEETVVPHPLDLQVCDAKYVFETRTIKRMELAVLNALKWRMQAVTACSFIDYYLHKFNDDDTPSTSALSRSVDLILSTCKVAEFLVFRPSEIAASVALVALEEHETSMFERVATCYKNLKKERVLRCYEMIQDKIIMRNIMRQSAGSVFSIPKSPIGVLDAAACISQQSEDTFVGSPATNYESSASSKRRRICR</sequence>
<protein>
    <recommendedName>
        <fullName>Cyclin-D3-1</fullName>
    </recommendedName>
    <alternativeName>
        <fullName>G1/S-specific cyclin-D3-1</fullName>
        <shortName>CycD3;1</shortName>
    </alternativeName>
</protein>
<evidence type="ECO:0000256" key="1">
    <source>
        <dbReference type="SAM" id="MobiDB-lite"/>
    </source>
</evidence>
<evidence type="ECO:0000303" key="2">
    <source>
    </source>
</evidence>
<evidence type="ECO:0000305" key="3"/>
<organism>
    <name type="scientific">Oryza sativa subsp. japonica</name>
    <name type="common">Rice</name>
    <dbReference type="NCBI Taxonomy" id="39947"/>
    <lineage>
        <taxon>Eukaryota</taxon>
        <taxon>Viridiplantae</taxon>
        <taxon>Streptophyta</taxon>
        <taxon>Embryophyta</taxon>
        <taxon>Tracheophyta</taxon>
        <taxon>Spermatophyta</taxon>
        <taxon>Magnoliopsida</taxon>
        <taxon>Liliopsida</taxon>
        <taxon>Poales</taxon>
        <taxon>Poaceae</taxon>
        <taxon>BOP clade</taxon>
        <taxon>Oryzoideae</taxon>
        <taxon>Oryzeae</taxon>
        <taxon>Oryzinae</taxon>
        <taxon>Oryza</taxon>
        <taxon>Oryza sativa</taxon>
    </lineage>
</organism>
<reference key="1">
    <citation type="journal article" date="2005" name="Nature">
        <title>The map-based sequence of the rice genome.</title>
        <authorList>
            <consortium name="International rice genome sequencing project (IRGSP)"/>
        </authorList>
    </citation>
    <scope>NUCLEOTIDE SEQUENCE [LARGE SCALE GENOMIC DNA]</scope>
    <source>
        <strain>cv. Nipponbare</strain>
    </source>
</reference>
<reference key="2">
    <citation type="journal article" date="2008" name="Nucleic Acids Res.">
        <title>The rice annotation project database (RAP-DB): 2008 update.</title>
        <authorList>
            <consortium name="The rice annotation project (RAP)"/>
        </authorList>
    </citation>
    <scope>GENOME REANNOTATION</scope>
    <source>
        <strain>cv. Nipponbare</strain>
    </source>
</reference>
<reference key="3">
    <citation type="journal article" date="2013" name="Rice">
        <title>Improvement of the Oryza sativa Nipponbare reference genome using next generation sequence and optical map data.</title>
        <authorList>
            <person name="Kawahara Y."/>
            <person name="de la Bastide M."/>
            <person name="Hamilton J.P."/>
            <person name="Kanamori H."/>
            <person name="McCombie W.R."/>
            <person name="Ouyang S."/>
            <person name="Schwartz D.C."/>
            <person name="Tanaka T."/>
            <person name="Wu J."/>
            <person name="Zhou S."/>
            <person name="Childs K.L."/>
            <person name="Davidson R.M."/>
            <person name="Lin H."/>
            <person name="Quesada-Ocampo L."/>
            <person name="Vaillancourt B."/>
            <person name="Sakai H."/>
            <person name="Lee S.S."/>
            <person name="Kim J."/>
            <person name="Numa H."/>
            <person name="Itoh T."/>
            <person name="Buell C.R."/>
            <person name="Matsumoto T."/>
        </authorList>
    </citation>
    <scope>GENOME REANNOTATION</scope>
    <source>
        <strain>cv. Nipponbare</strain>
    </source>
</reference>
<reference key="4">
    <citation type="journal article" date="2003" name="Science">
        <title>Collection, mapping, and annotation of over 28,000 cDNA clones from japonica rice.</title>
        <authorList>
            <consortium name="The rice full-length cDNA consortium"/>
        </authorList>
    </citation>
    <scope>NUCLEOTIDE SEQUENCE [LARGE SCALE MRNA] (ISOFORM 2)</scope>
    <source>
        <strain>cv. Nipponbare</strain>
    </source>
</reference>
<reference key="5">
    <citation type="journal article" date="2006" name="Mol. Genet. Genomics">
        <title>Genome-wide analysis of cyclin family in rice (Oryza sativa L.).</title>
        <authorList>
            <person name="La H."/>
            <person name="Li J."/>
            <person name="Ji Z."/>
            <person name="Cheng Y."/>
            <person name="Li X."/>
            <person name="Jiang S."/>
            <person name="Venkatesh P.N."/>
            <person name="Ramachandran S."/>
        </authorList>
    </citation>
    <scope>GENE FAMILY</scope>
    <scope>NOMENCLATURE</scope>
</reference>
<dbReference type="EMBL" id="AP005425">
    <property type="protein sequence ID" value="BAD36091.1"/>
    <property type="molecule type" value="Genomic_DNA"/>
</dbReference>
<dbReference type="EMBL" id="AP008212">
    <property type="protein sequence ID" value="BAF19067.1"/>
    <property type="molecule type" value="Genomic_DNA"/>
</dbReference>
<dbReference type="EMBL" id="AP014962">
    <property type="status" value="NOT_ANNOTATED_CDS"/>
    <property type="molecule type" value="Genomic_DNA"/>
</dbReference>
<dbReference type="EMBL" id="AK103765">
    <property type="status" value="NOT_ANNOTATED_CDS"/>
    <property type="molecule type" value="mRNA"/>
</dbReference>
<dbReference type="RefSeq" id="XP_015643406.1">
    <property type="nucleotide sequence ID" value="XM_015787920.1"/>
</dbReference>
<dbReference type="SMR" id="Q69QB8"/>
<dbReference type="FunCoup" id="Q69QB8">
    <property type="interactions" value="232"/>
</dbReference>
<dbReference type="STRING" id="39947.Q69QB8"/>
<dbReference type="PaxDb" id="39947-Q69QB8"/>
<dbReference type="KEGG" id="dosa:Os06g0217900"/>
<dbReference type="eggNOG" id="KOG0656">
    <property type="taxonomic scope" value="Eukaryota"/>
</dbReference>
<dbReference type="InParanoid" id="Q69QB8"/>
<dbReference type="OrthoDB" id="5590282at2759"/>
<dbReference type="Proteomes" id="UP000000763">
    <property type="component" value="Chromosome 6"/>
</dbReference>
<dbReference type="Proteomes" id="UP000059680">
    <property type="component" value="Chromosome 6"/>
</dbReference>
<dbReference type="GO" id="GO:0000307">
    <property type="term" value="C:cyclin-dependent protein kinase holoenzyme complex"/>
    <property type="evidence" value="ECO:0000318"/>
    <property type="project" value="GO_Central"/>
</dbReference>
<dbReference type="GO" id="GO:0005737">
    <property type="term" value="C:cytoplasm"/>
    <property type="evidence" value="ECO:0000318"/>
    <property type="project" value="GO_Central"/>
</dbReference>
<dbReference type="GO" id="GO:0005634">
    <property type="term" value="C:nucleus"/>
    <property type="evidence" value="ECO:0000318"/>
    <property type="project" value="GO_Central"/>
</dbReference>
<dbReference type="GO" id="GO:0016538">
    <property type="term" value="F:cyclin-dependent protein serine/threonine kinase regulator activity"/>
    <property type="evidence" value="ECO:0000318"/>
    <property type="project" value="GO_Central"/>
</dbReference>
<dbReference type="GO" id="GO:0051301">
    <property type="term" value="P:cell division"/>
    <property type="evidence" value="ECO:0007669"/>
    <property type="project" value="UniProtKB-KW"/>
</dbReference>
<dbReference type="GO" id="GO:0000082">
    <property type="term" value="P:G1/S transition of mitotic cell cycle"/>
    <property type="evidence" value="ECO:0000318"/>
    <property type="project" value="GO_Central"/>
</dbReference>
<dbReference type="CDD" id="cd20543">
    <property type="entry name" value="CYCLIN_AtCycD-like_rpt1"/>
    <property type="match status" value="1"/>
</dbReference>
<dbReference type="CDD" id="cd20544">
    <property type="entry name" value="CYCLIN_AtCycD-like_rpt2"/>
    <property type="match status" value="1"/>
</dbReference>
<dbReference type="FunFam" id="1.10.472.10:FF:000034">
    <property type="entry name" value="D2/4-type cyclin"/>
    <property type="match status" value="1"/>
</dbReference>
<dbReference type="FunFam" id="1.10.472.10:FF:000040">
    <property type="entry name" value="D6-type cyclin"/>
    <property type="match status" value="1"/>
</dbReference>
<dbReference type="Gene3D" id="1.10.472.10">
    <property type="entry name" value="Cyclin-like"/>
    <property type="match status" value="2"/>
</dbReference>
<dbReference type="InterPro" id="IPR039361">
    <property type="entry name" value="Cyclin"/>
</dbReference>
<dbReference type="InterPro" id="IPR013763">
    <property type="entry name" value="Cyclin-like_dom"/>
</dbReference>
<dbReference type="InterPro" id="IPR036915">
    <property type="entry name" value="Cyclin-like_sf"/>
</dbReference>
<dbReference type="InterPro" id="IPR004367">
    <property type="entry name" value="Cyclin_C-dom"/>
</dbReference>
<dbReference type="InterPro" id="IPR006671">
    <property type="entry name" value="Cyclin_N"/>
</dbReference>
<dbReference type="InterPro" id="IPR048258">
    <property type="entry name" value="Cyclins_cyclin-box"/>
</dbReference>
<dbReference type="PANTHER" id="PTHR10177">
    <property type="entry name" value="CYCLINS"/>
    <property type="match status" value="1"/>
</dbReference>
<dbReference type="Pfam" id="PF02984">
    <property type="entry name" value="Cyclin_C"/>
    <property type="match status" value="1"/>
</dbReference>
<dbReference type="Pfam" id="PF00134">
    <property type="entry name" value="Cyclin_N"/>
    <property type="match status" value="1"/>
</dbReference>
<dbReference type="SMART" id="SM00385">
    <property type="entry name" value="CYCLIN"/>
    <property type="match status" value="2"/>
</dbReference>
<dbReference type="SMART" id="SM01332">
    <property type="entry name" value="Cyclin_C"/>
    <property type="match status" value="1"/>
</dbReference>
<dbReference type="SUPFAM" id="SSF47954">
    <property type="entry name" value="Cyclin-like"/>
    <property type="match status" value="1"/>
</dbReference>
<dbReference type="PROSITE" id="PS00292">
    <property type="entry name" value="CYCLINS"/>
    <property type="match status" value="1"/>
</dbReference>
<name>CCD31_ORYSJ</name>